<sequence length="433" mass="48396">MTDLTPREIVSELDRFIIGQKDAKRAVAVALRNRWRRKQLSDDIRDEVYPKNILMIGPTGVGKTEISRRLARLAKAPFLKVEATKFTEVGYVGRDVDSIIRDLVDAAIVETRARMREDVKSRAVKAAEDRVIEAIAGRDAREQTREMFRGKLKRGELDATVIEVEVADTSNPMQMLDPTGQGQMGMMNLGEIFGKAFGGRTTRRKMTVAESHDILMNEEADKLLDDEVVKATALEAVQENGIVFIDEIDKVCARSDMRGADVSREGVQRDLLPLIEGTTVSTKYGPVKTDHILFIASGAFHIAKPSDLLPELQGRLPIRVELRALTEEDFVRILSETDNALTRQYKALMKTEKVGITFTEEGIKALASIAAEVNRSVENIGARRLYTVMERVFEELSFHAPDRSGEEVTVDAAYVEKNLGELARSTDLSRYVL</sequence>
<dbReference type="EMBL" id="CP000661">
    <property type="protein sequence ID" value="ABP71834.1"/>
    <property type="molecule type" value="Genomic_DNA"/>
</dbReference>
<dbReference type="SMR" id="A4WWS0"/>
<dbReference type="STRING" id="349102.Rsph17025_2948"/>
<dbReference type="KEGG" id="rsq:Rsph17025_2948"/>
<dbReference type="eggNOG" id="COG1220">
    <property type="taxonomic scope" value="Bacteria"/>
</dbReference>
<dbReference type="HOGENOM" id="CLU_033123_0_0_5"/>
<dbReference type="BioCyc" id="RSPH349102:G1G8M-3048-MONOMER"/>
<dbReference type="GO" id="GO:0009376">
    <property type="term" value="C:HslUV protease complex"/>
    <property type="evidence" value="ECO:0007669"/>
    <property type="project" value="UniProtKB-UniRule"/>
</dbReference>
<dbReference type="GO" id="GO:0005524">
    <property type="term" value="F:ATP binding"/>
    <property type="evidence" value="ECO:0007669"/>
    <property type="project" value="UniProtKB-UniRule"/>
</dbReference>
<dbReference type="GO" id="GO:0016887">
    <property type="term" value="F:ATP hydrolysis activity"/>
    <property type="evidence" value="ECO:0007669"/>
    <property type="project" value="InterPro"/>
</dbReference>
<dbReference type="GO" id="GO:0008233">
    <property type="term" value="F:peptidase activity"/>
    <property type="evidence" value="ECO:0007669"/>
    <property type="project" value="InterPro"/>
</dbReference>
<dbReference type="GO" id="GO:0036402">
    <property type="term" value="F:proteasome-activating activity"/>
    <property type="evidence" value="ECO:0007669"/>
    <property type="project" value="UniProtKB-UniRule"/>
</dbReference>
<dbReference type="GO" id="GO:0043335">
    <property type="term" value="P:protein unfolding"/>
    <property type="evidence" value="ECO:0007669"/>
    <property type="project" value="UniProtKB-UniRule"/>
</dbReference>
<dbReference type="GO" id="GO:0051603">
    <property type="term" value="P:proteolysis involved in protein catabolic process"/>
    <property type="evidence" value="ECO:0007669"/>
    <property type="project" value="TreeGrafter"/>
</dbReference>
<dbReference type="CDD" id="cd19498">
    <property type="entry name" value="RecA-like_HslU"/>
    <property type="match status" value="1"/>
</dbReference>
<dbReference type="FunFam" id="3.40.50.300:FF:000213">
    <property type="entry name" value="ATP-dependent protease ATPase subunit HslU"/>
    <property type="match status" value="1"/>
</dbReference>
<dbReference type="FunFam" id="3.40.50.300:FF:000220">
    <property type="entry name" value="ATP-dependent protease ATPase subunit HslU"/>
    <property type="match status" value="1"/>
</dbReference>
<dbReference type="Gene3D" id="1.10.8.60">
    <property type="match status" value="1"/>
</dbReference>
<dbReference type="Gene3D" id="1.10.8.10">
    <property type="entry name" value="DNA helicase RuvA subunit, C-terminal domain"/>
    <property type="match status" value="2"/>
</dbReference>
<dbReference type="Gene3D" id="3.40.50.300">
    <property type="entry name" value="P-loop containing nucleotide triphosphate hydrolases"/>
    <property type="match status" value="2"/>
</dbReference>
<dbReference type="HAMAP" id="MF_00249">
    <property type="entry name" value="HslU"/>
    <property type="match status" value="1"/>
</dbReference>
<dbReference type="InterPro" id="IPR003593">
    <property type="entry name" value="AAA+_ATPase"/>
</dbReference>
<dbReference type="InterPro" id="IPR050052">
    <property type="entry name" value="ATP-dep_Clp_protease_ClpX"/>
</dbReference>
<dbReference type="InterPro" id="IPR003959">
    <property type="entry name" value="ATPase_AAA_core"/>
</dbReference>
<dbReference type="InterPro" id="IPR019489">
    <property type="entry name" value="Clp_ATPase_C"/>
</dbReference>
<dbReference type="InterPro" id="IPR004491">
    <property type="entry name" value="HslU"/>
</dbReference>
<dbReference type="InterPro" id="IPR027417">
    <property type="entry name" value="P-loop_NTPase"/>
</dbReference>
<dbReference type="NCBIfam" id="TIGR00390">
    <property type="entry name" value="hslU"/>
    <property type="match status" value="1"/>
</dbReference>
<dbReference type="NCBIfam" id="NF003544">
    <property type="entry name" value="PRK05201.1"/>
    <property type="match status" value="1"/>
</dbReference>
<dbReference type="PANTHER" id="PTHR48102">
    <property type="entry name" value="ATP-DEPENDENT CLP PROTEASE ATP-BINDING SUBUNIT CLPX-LIKE, MITOCHONDRIAL-RELATED"/>
    <property type="match status" value="1"/>
</dbReference>
<dbReference type="PANTHER" id="PTHR48102:SF3">
    <property type="entry name" value="ATP-DEPENDENT PROTEASE ATPASE SUBUNIT HSLU"/>
    <property type="match status" value="1"/>
</dbReference>
<dbReference type="Pfam" id="PF00004">
    <property type="entry name" value="AAA"/>
    <property type="match status" value="1"/>
</dbReference>
<dbReference type="Pfam" id="PF07724">
    <property type="entry name" value="AAA_2"/>
    <property type="match status" value="1"/>
</dbReference>
<dbReference type="SMART" id="SM00382">
    <property type="entry name" value="AAA"/>
    <property type="match status" value="1"/>
</dbReference>
<dbReference type="SMART" id="SM01086">
    <property type="entry name" value="ClpB_D2-small"/>
    <property type="match status" value="1"/>
</dbReference>
<dbReference type="SUPFAM" id="SSF52540">
    <property type="entry name" value="P-loop containing nucleoside triphosphate hydrolases"/>
    <property type="match status" value="1"/>
</dbReference>
<proteinExistence type="inferred from homology"/>
<protein>
    <recommendedName>
        <fullName evidence="1">ATP-dependent protease ATPase subunit HslU</fullName>
    </recommendedName>
    <alternativeName>
        <fullName evidence="1">Unfoldase HslU</fullName>
    </alternativeName>
</protein>
<accession>A4WWS0</accession>
<reference key="1">
    <citation type="submission" date="2007-04" db="EMBL/GenBank/DDBJ databases">
        <title>Complete sequence of chromosome of Rhodobacter sphaeroides ATCC 17025.</title>
        <authorList>
            <consortium name="US DOE Joint Genome Institute"/>
            <person name="Copeland A."/>
            <person name="Lucas S."/>
            <person name="Lapidus A."/>
            <person name="Barry K."/>
            <person name="Detter J.C."/>
            <person name="Glavina del Rio T."/>
            <person name="Hammon N."/>
            <person name="Israni S."/>
            <person name="Dalin E."/>
            <person name="Tice H."/>
            <person name="Pitluck S."/>
            <person name="Chertkov O."/>
            <person name="Brettin T."/>
            <person name="Bruce D."/>
            <person name="Han C."/>
            <person name="Schmutz J."/>
            <person name="Larimer F."/>
            <person name="Land M."/>
            <person name="Hauser L."/>
            <person name="Kyrpides N."/>
            <person name="Kim E."/>
            <person name="Richardson P."/>
            <person name="Mackenzie C."/>
            <person name="Choudhary M."/>
            <person name="Donohue T.J."/>
            <person name="Kaplan S."/>
        </authorList>
    </citation>
    <scope>NUCLEOTIDE SEQUENCE [LARGE SCALE GENOMIC DNA]</scope>
    <source>
        <strain>ATCC 17025 / ATH 2.4.3</strain>
    </source>
</reference>
<name>HSLU_CERS5</name>
<organism>
    <name type="scientific">Cereibacter sphaeroides (strain ATCC 17025 / ATH 2.4.3)</name>
    <name type="common">Rhodobacter sphaeroides</name>
    <dbReference type="NCBI Taxonomy" id="349102"/>
    <lineage>
        <taxon>Bacteria</taxon>
        <taxon>Pseudomonadati</taxon>
        <taxon>Pseudomonadota</taxon>
        <taxon>Alphaproteobacteria</taxon>
        <taxon>Rhodobacterales</taxon>
        <taxon>Paracoccaceae</taxon>
        <taxon>Cereibacter</taxon>
    </lineage>
</organism>
<keyword id="KW-0067">ATP-binding</keyword>
<keyword id="KW-0143">Chaperone</keyword>
<keyword id="KW-0963">Cytoplasm</keyword>
<keyword id="KW-0547">Nucleotide-binding</keyword>
<keyword id="KW-0346">Stress response</keyword>
<evidence type="ECO:0000255" key="1">
    <source>
        <dbReference type="HAMAP-Rule" id="MF_00249"/>
    </source>
</evidence>
<gene>
    <name evidence="1" type="primary">hslU</name>
    <name type="ordered locus">Rsph17025_2948</name>
</gene>
<feature type="chain" id="PRO_1000012793" description="ATP-dependent protease ATPase subunit HslU">
    <location>
        <begin position="1"/>
        <end position="433"/>
    </location>
</feature>
<feature type="binding site" evidence="1">
    <location>
        <position position="18"/>
    </location>
    <ligand>
        <name>ATP</name>
        <dbReference type="ChEBI" id="CHEBI:30616"/>
    </ligand>
</feature>
<feature type="binding site" evidence="1">
    <location>
        <begin position="60"/>
        <end position="65"/>
    </location>
    <ligand>
        <name>ATP</name>
        <dbReference type="ChEBI" id="CHEBI:30616"/>
    </ligand>
</feature>
<feature type="binding site" evidence="1">
    <location>
        <position position="246"/>
    </location>
    <ligand>
        <name>ATP</name>
        <dbReference type="ChEBI" id="CHEBI:30616"/>
    </ligand>
</feature>
<feature type="binding site" evidence="1">
    <location>
        <position position="311"/>
    </location>
    <ligand>
        <name>ATP</name>
        <dbReference type="ChEBI" id="CHEBI:30616"/>
    </ligand>
</feature>
<feature type="binding site" evidence="1">
    <location>
        <position position="383"/>
    </location>
    <ligand>
        <name>ATP</name>
        <dbReference type="ChEBI" id="CHEBI:30616"/>
    </ligand>
</feature>
<comment type="function">
    <text evidence="1">ATPase subunit of a proteasome-like degradation complex; this subunit has chaperone activity. The binding of ATP and its subsequent hydrolysis by HslU are essential for unfolding of protein substrates subsequently hydrolyzed by HslV. HslU recognizes the N-terminal part of its protein substrates and unfolds these before they are guided to HslV for hydrolysis.</text>
</comment>
<comment type="subunit">
    <text evidence="1">A double ring-shaped homohexamer of HslV is capped on each side by a ring-shaped HslU homohexamer. The assembly of the HslU/HslV complex is dependent on binding of ATP.</text>
</comment>
<comment type="subcellular location">
    <subcellularLocation>
        <location evidence="1">Cytoplasm</location>
    </subcellularLocation>
</comment>
<comment type="similarity">
    <text evidence="1">Belongs to the ClpX chaperone family. HslU subfamily.</text>
</comment>